<accession>A9NF64</accession>
<keyword id="KW-0046">Antibiotic resistance</keyword>
<keyword id="KW-1003">Cell membrane</keyword>
<keyword id="KW-0133">Cell shape</keyword>
<keyword id="KW-0961">Cell wall biogenesis/degradation</keyword>
<keyword id="KW-0378">Hydrolase</keyword>
<keyword id="KW-0472">Membrane</keyword>
<keyword id="KW-0573">Peptidoglycan synthesis</keyword>
<keyword id="KW-1185">Reference proteome</keyword>
<keyword id="KW-0812">Transmembrane</keyword>
<keyword id="KW-1133">Transmembrane helix</keyword>
<gene>
    <name evidence="1" type="primary">uppP</name>
    <name type="ordered locus">ACL_0372</name>
</gene>
<protein>
    <recommendedName>
        <fullName evidence="1">Undecaprenyl-diphosphatase</fullName>
        <ecNumber evidence="1">3.6.1.27</ecNumber>
    </recommendedName>
    <alternativeName>
        <fullName evidence="1">Bacitracin resistance protein</fullName>
    </alternativeName>
    <alternativeName>
        <fullName evidence="1">Undecaprenyl pyrophosphate phosphatase</fullName>
    </alternativeName>
</protein>
<evidence type="ECO:0000255" key="1">
    <source>
        <dbReference type="HAMAP-Rule" id="MF_01006"/>
    </source>
</evidence>
<dbReference type="EC" id="3.6.1.27" evidence="1"/>
<dbReference type="EMBL" id="CP000896">
    <property type="protein sequence ID" value="ABX80994.1"/>
    <property type="molecule type" value="Genomic_DNA"/>
</dbReference>
<dbReference type="RefSeq" id="WP_012242325.1">
    <property type="nucleotide sequence ID" value="NC_010163.1"/>
</dbReference>
<dbReference type="SMR" id="A9NF64"/>
<dbReference type="STRING" id="441768.ACL_0372"/>
<dbReference type="GeneID" id="41338554"/>
<dbReference type="KEGG" id="acl:ACL_0372"/>
<dbReference type="eggNOG" id="COG1968">
    <property type="taxonomic scope" value="Bacteria"/>
</dbReference>
<dbReference type="HOGENOM" id="CLU_060296_1_2_14"/>
<dbReference type="OrthoDB" id="9808289at2"/>
<dbReference type="Proteomes" id="UP000008558">
    <property type="component" value="Chromosome"/>
</dbReference>
<dbReference type="GO" id="GO:0005886">
    <property type="term" value="C:plasma membrane"/>
    <property type="evidence" value="ECO:0007669"/>
    <property type="project" value="UniProtKB-SubCell"/>
</dbReference>
<dbReference type="GO" id="GO:0050380">
    <property type="term" value="F:undecaprenyl-diphosphatase activity"/>
    <property type="evidence" value="ECO:0007669"/>
    <property type="project" value="UniProtKB-UniRule"/>
</dbReference>
<dbReference type="GO" id="GO:0071555">
    <property type="term" value="P:cell wall organization"/>
    <property type="evidence" value="ECO:0007669"/>
    <property type="project" value="UniProtKB-KW"/>
</dbReference>
<dbReference type="GO" id="GO:0009252">
    <property type="term" value="P:peptidoglycan biosynthetic process"/>
    <property type="evidence" value="ECO:0007669"/>
    <property type="project" value="UniProtKB-KW"/>
</dbReference>
<dbReference type="GO" id="GO:0008360">
    <property type="term" value="P:regulation of cell shape"/>
    <property type="evidence" value="ECO:0007669"/>
    <property type="project" value="UniProtKB-KW"/>
</dbReference>
<dbReference type="GO" id="GO:0046677">
    <property type="term" value="P:response to antibiotic"/>
    <property type="evidence" value="ECO:0007669"/>
    <property type="project" value="UniProtKB-UniRule"/>
</dbReference>
<dbReference type="HAMAP" id="MF_01006">
    <property type="entry name" value="Undec_diphosphatase"/>
    <property type="match status" value="1"/>
</dbReference>
<dbReference type="InterPro" id="IPR003824">
    <property type="entry name" value="UppP"/>
</dbReference>
<dbReference type="PANTHER" id="PTHR30622">
    <property type="entry name" value="UNDECAPRENYL-DIPHOSPHATASE"/>
    <property type="match status" value="1"/>
</dbReference>
<dbReference type="PANTHER" id="PTHR30622:SF2">
    <property type="entry name" value="UNDECAPRENYL-DIPHOSPHATASE"/>
    <property type="match status" value="1"/>
</dbReference>
<dbReference type="Pfam" id="PF02673">
    <property type="entry name" value="BacA"/>
    <property type="match status" value="1"/>
</dbReference>
<proteinExistence type="inferred from homology"/>
<comment type="function">
    <text evidence="1">Catalyzes the dephosphorylation of undecaprenyl diphosphate (UPP). Confers resistance to bacitracin.</text>
</comment>
<comment type="catalytic activity">
    <reaction evidence="1">
        <text>di-trans,octa-cis-undecaprenyl diphosphate + H2O = di-trans,octa-cis-undecaprenyl phosphate + phosphate + H(+)</text>
        <dbReference type="Rhea" id="RHEA:28094"/>
        <dbReference type="ChEBI" id="CHEBI:15377"/>
        <dbReference type="ChEBI" id="CHEBI:15378"/>
        <dbReference type="ChEBI" id="CHEBI:43474"/>
        <dbReference type="ChEBI" id="CHEBI:58405"/>
        <dbReference type="ChEBI" id="CHEBI:60392"/>
        <dbReference type="EC" id="3.6.1.27"/>
    </reaction>
</comment>
<comment type="subcellular location">
    <subcellularLocation>
        <location evidence="1">Cell membrane</location>
        <topology evidence="1">Multi-pass membrane protein</topology>
    </subcellularLocation>
</comment>
<comment type="miscellaneous">
    <text>Bacitracin is thought to be involved in the inhibition of peptidoglycan synthesis by sequestering undecaprenyl diphosphate, thereby reducing the pool of lipid carrier available.</text>
</comment>
<comment type="similarity">
    <text evidence="1">Belongs to the UppP family.</text>
</comment>
<feature type="chain" id="PRO_1000083973" description="Undecaprenyl-diphosphatase">
    <location>
        <begin position="1"/>
        <end position="277"/>
    </location>
</feature>
<feature type="transmembrane region" description="Helical" evidence="1">
    <location>
        <begin position="3"/>
        <end position="23"/>
    </location>
</feature>
<feature type="transmembrane region" description="Helical" evidence="1">
    <location>
        <begin position="48"/>
        <end position="68"/>
    </location>
</feature>
<feature type="transmembrane region" description="Helical" evidence="1">
    <location>
        <begin position="97"/>
        <end position="117"/>
    </location>
</feature>
<feature type="transmembrane region" description="Helical" evidence="1">
    <location>
        <begin position="125"/>
        <end position="145"/>
    </location>
</feature>
<feature type="transmembrane region" description="Helical" evidence="1">
    <location>
        <begin position="198"/>
        <end position="218"/>
    </location>
</feature>
<feature type="transmembrane region" description="Helical" evidence="1">
    <location>
        <begin position="227"/>
        <end position="247"/>
    </location>
</feature>
<feature type="transmembrane region" description="Helical" evidence="1">
    <location>
        <begin position="257"/>
        <end position="277"/>
    </location>
</feature>
<sequence>MDYIIELIKYIILGIIQGVTEIFPVSSSGHLVLFSNLFLGGEDINATLTLFLMITNMGSFLALLIYYFKDVKELVVDSFNFVFNKEKRKEIIVQENISYAVKLIIAIVPIGIAGLLIKDYLPTNLLSIGISLIITSLLLFLVFLLRNKKFSNDITFKNAGVIGLIQMFAVFPGISRSGITLVGGLSQKIEIKKVMRFSFLCYLLISIPVSGLGLYDAIKNPGTMSDIPGFSLAFIFSFIFSLLTIKIMHKYVTVKNLIWFSLYALTVGLVSITLYII</sequence>
<reference key="1">
    <citation type="journal article" date="2011" name="J. Bacteriol.">
        <title>Complete genome and proteome of Acholeplasma laidlawii.</title>
        <authorList>
            <person name="Lazarev V.N."/>
            <person name="Levitskii S.A."/>
            <person name="Basovskii Y.I."/>
            <person name="Chukin M.M."/>
            <person name="Akopian T.A."/>
            <person name="Vereshchagin V.V."/>
            <person name="Kostrjukova E.S."/>
            <person name="Kovaleva G.Y."/>
            <person name="Kazanov M.D."/>
            <person name="Malko D.B."/>
            <person name="Vitreschak A.G."/>
            <person name="Sernova N.V."/>
            <person name="Gelfand M.S."/>
            <person name="Demina I.A."/>
            <person name="Serebryakova M.V."/>
            <person name="Galyamina M.A."/>
            <person name="Vtyurin N.N."/>
            <person name="Rogov S.I."/>
            <person name="Alexeev D.G."/>
            <person name="Ladygina V.G."/>
            <person name="Govorun V.M."/>
        </authorList>
    </citation>
    <scope>NUCLEOTIDE SEQUENCE [LARGE SCALE GENOMIC DNA]</scope>
    <source>
        <strain>PG-8A</strain>
    </source>
</reference>
<organism>
    <name type="scientific">Acholeplasma laidlawii (strain PG-8A)</name>
    <dbReference type="NCBI Taxonomy" id="441768"/>
    <lineage>
        <taxon>Bacteria</taxon>
        <taxon>Bacillati</taxon>
        <taxon>Mycoplasmatota</taxon>
        <taxon>Mollicutes</taxon>
        <taxon>Acholeplasmatales</taxon>
        <taxon>Acholeplasmataceae</taxon>
        <taxon>Acholeplasma</taxon>
    </lineage>
</organism>
<name>UPPP_ACHLI</name>